<keyword id="KW-0963">Cytoplasm</keyword>
<keyword id="KW-0648">Protein biosynthesis</keyword>
<organism>
    <name type="scientific">Streptococcus pyogenes serotype M4 (strain MGAS10750)</name>
    <dbReference type="NCBI Taxonomy" id="370554"/>
    <lineage>
        <taxon>Bacteria</taxon>
        <taxon>Bacillati</taxon>
        <taxon>Bacillota</taxon>
        <taxon>Bacilli</taxon>
        <taxon>Lactobacillales</taxon>
        <taxon>Streptococcaceae</taxon>
        <taxon>Streptococcus</taxon>
    </lineage>
</organism>
<reference key="1">
    <citation type="journal article" date="2006" name="Proc. Natl. Acad. Sci. U.S.A.">
        <title>Molecular genetic anatomy of inter- and intraserotype variation in the human bacterial pathogen group A Streptococcus.</title>
        <authorList>
            <person name="Beres S.B."/>
            <person name="Richter E.W."/>
            <person name="Nagiec M.J."/>
            <person name="Sumby P."/>
            <person name="Porcella S.F."/>
            <person name="DeLeo F.R."/>
            <person name="Musser J.M."/>
        </authorList>
    </citation>
    <scope>NUCLEOTIDE SEQUENCE [LARGE SCALE GENOMIC DNA]</scope>
    <source>
        <strain>MGAS10750</strain>
    </source>
</reference>
<accession>Q1J832</accession>
<name>RRF_STRPF</name>
<feature type="chain" id="PRO_1000003286" description="Ribosome-recycling factor">
    <location>
        <begin position="1"/>
        <end position="185"/>
    </location>
</feature>
<comment type="function">
    <text evidence="1">Responsible for the release of ribosomes from messenger RNA at the termination of protein biosynthesis. May increase the efficiency of translation by recycling ribosomes from one round of translation to another.</text>
</comment>
<comment type="subcellular location">
    <subcellularLocation>
        <location evidence="1">Cytoplasm</location>
    </subcellularLocation>
</comment>
<comment type="similarity">
    <text evidence="1">Belongs to the RRF family.</text>
</comment>
<evidence type="ECO:0000255" key="1">
    <source>
        <dbReference type="HAMAP-Rule" id="MF_00040"/>
    </source>
</evidence>
<gene>
    <name evidence="1" type="primary">frr</name>
    <name type="ordered locus">MGAS10750_Spy0379</name>
</gene>
<proteinExistence type="inferred from homology"/>
<dbReference type="EMBL" id="CP000262">
    <property type="protein sequence ID" value="ABF37329.1"/>
    <property type="molecule type" value="Genomic_DNA"/>
</dbReference>
<dbReference type="SMR" id="Q1J832"/>
<dbReference type="KEGG" id="spi:MGAS10750_Spy0379"/>
<dbReference type="HOGENOM" id="CLU_073981_2_0_9"/>
<dbReference type="Proteomes" id="UP000002434">
    <property type="component" value="Chromosome"/>
</dbReference>
<dbReference type="GO" id="GO:0005737">
    <property type="term" value="C:cytoplasm"/>
    <property type="evidence" value="ECO:0007669"/>
    <property type="project" value="UniProtKB-SubCell"/>
</dbReference>
<dbReference type="GO" id="GO:0043023">
    <property type="term" value="F:ribosomal large subunit binding"/>
    <property type="evidence" value="ECO:0007669"/>
    <property type="project" value="TreeGrafter"/>
</dbReference>
<dbReference type="GO" id="GO:0006415">
    <property type="term" value="P:translational termination"/>
    <property type="evidence" value="ECO:0007669"/>
    <property type="project" value="UniProtKB-UniRule"/>
</dbReference>
<dbReference type="CDD" id="cd00520">
    <property type="entry name" value="RRF"/>
    <property type="match status" value="1"/>
</dbReference>
<dbReference type="FunFam" id="1.10.132.20:FF:000001">
    <property type="entry name" value="Ribosome-recycling factor"/>
    <property type="match status" value="1"/>
</dbReference>
<dbReference type="FunFam" id="3.30.1360.40:FF:000001">
    <property type="entry name" value="Ribosome-recycling factor"/>
    <property type="match status" value="1"/>
</dbReference>
<dbReference type="Gene3D" id="3.30.1360.40">
    <property type="match status" value="1"/>
</dbReference>
<dbReference type="Gene3D" id="1.10.132.20">
    <property type="entry name" value="Ribosome-recycling factor"/>
    <property type="match status" value="1"/>
</dbReference>
<dbReference type="HAMAP" id="MF_00040">
    <property type="entry name" value="RRF"/>
    <property type="match status" value="1"/>
</dbReference>
<dbReference type="InterPro" id="IPR002661">
    <property type="entry name" value="Ribosome_recyc_fac"/>
</dbReference>
<dbReference type="InterPro" id="IPR023584">
    <property type="entry name" value="Ribosome_recyc_fac_dom"/>
</dbReference>
<dbReference type="InterPro" id="IPR036191">
    <property type="entry name" value="RRF_sf"/>
</dbReference>
<dbReference type="NCBIfam" id="TIGR00496">
    <property type="entry name" value="frr"/>
    <property type="match status" value="1"/>
</dbReference>
<dbReference type="PANTHER" id="PTHR20982:SF3">
    <property type="entry name" value="MITOCHONDRIAL RIBOSOME RECYCLING FACTOR PSEUDO 1"/>
    <property type="match status" value="1"/>
</dbReference>
<dbReference type="PANTHER" id="PTHR20982">
    <property type="entry name" value="RIBOSOME RECYCLING FACTOR"/>
    <property type="match status" value="1"/>
</dbReference>
<dbReference type="Pfam" id="PF01765">
    <property type="entry name" value="RRF"/>
    <property type="match status" value="1"/>
</dbReference>
<dbReference type="SUPFAM" id="SSF55194">
    <property type="entry name" value="Ribosome recycling factor, RRF"/>
    <property type="match status" value="1"/>
</dbReference>
<protein>
    <recommendedName>
        <fullName evidence="1">Ribosome-recycling factor</fullName>
        <shortName evidence="1">RRF</shortName>
    </recommendedName>
    <alternativeName>
        <fullName evidence="1">Ribosome-releasing factor</fullName>
    </alternativeName>
</protein>
<sequence>MANAIIETAKERFAQSHQSLSREYASIRAGRANASLLDRIQVDYYGAPTPLNQLASITVPEARVLLISPFDKSSIKDIERALNASDLGITPANDGSVIRLVIPALTEETRKELAKEVKKVGENAKIAIRNIRRDAMDDAKKQEKAKEITEDELKTLEKDIQKATDDAIKEIDRMTAEKEKELLSV</sequence>